<gene>
    <name evidence="1" type="primary">thiE</name>
    <name type="ordered locus">AZC_0079</name>
</gene>
<dbReference type="EC" id="2.5.1.3" evidence="1"/>
<dbReference type="EMBL" id="AP009384">
    <property type="protein sequence ID" value="BAF86077.1"/>
    <property type="status" value="ALT_INIT"/>
    <property type="molecule type" value="Genomic_DNA"/>
</dbReference>
<dbReference type="RefSeq" id="WP_043878701.1">
    <property type="nucleotide sequence ID" value="NC_009937.1"/>
</dbReference>
<dbReference type="SMR" id="A8IGE6"/>
<dbReference type="STRING" id="438753.AZC_0079"/>
<dbReference type="KEGG" id="azc:AZC_0079"/>
<dbReference type="eggNOG" id="COG0352">
    <property type="taxonomic scope" value="Bacteria"/>
</dbReference>
<dbReference type="HOGENOM" id="CLU_018272_3_2_5"/>
<dbReference type="UniPathway" id="UPA00060">
    <property type="reaction ID" value="UER00141"/>
</dbReference>
<dbReference type="Proteomes" id="UP000000270">
    <property type="component" value="Chromosome"/>
</dbReference>
<dbReference type="GO" id="GO:0005737">
    <property type="term" value="C:cytoplasm"/>
    <property type="evidence" value="ECO:0007669"/>
    <property type="project" value="TreeGrafter"/>
</dbReference>
<dbReference type="GO" id="GO:0000287">
    <property type="term" value="F:magnesium ion binding"/>
    <property type="evidence" value="ECO:0007669"/>
    <property type="project" value="UniProtKB-UniRule"/>
</dbReference>
<dbReference type="GO" id="GO:0004789">
    <property type="term" value="F:thiamine-phosphate diphosphorylase activity"/>
    <property type="evidence" value="ECO:0007669"/>
    <property type="project" value="UniProtKB-UniRule"/>
</dbReference>
<dbReference type="GO" id="GO:0009228">
    <property type="term" value="P:thiamine biosynthetic process"/>
    <property type="evidence" value="ECO:0007669"/>
    <property type="project" value="UniProtKB-KW"/>
</dbReference>
<dbReference type="GO" id="GO:0009229">
    <property type="term" value="P:thiamine diphosphate biosynthetic process"/>
    <property type="evidence" value="ECO:0007669"/>
    <property type="project" value="UniProtKB-UniRule"/>
</dbReference>
<dbReference type="CDD" id="cd00564">
    <property type="entry name" value="TMP_TenI"/>
    <property type="match status" value="1"/>
</dbReference>
<dbReference type="FunFam" id="3.20.20.70:FF:000096">
    <property type="entry name" value="Thiamine-phosphate synthase"/>
    <property type="match status" value="1"/>
</dbReference>
<dbReference type="Gene3D" id="3.20.20.70">
    <property type="entry name" value="Aldolase class I"/>
    <property type="match status" value="1"/>
</dbReference>
<dbReference type="HAMAP" id="MF_00097">
    <property type="entry name" value="TMP_synthase"/>
    <property type="match status" value="1"/>
</dbReference>
<dbReference type="InterPro" id="IPR013785">
    <property type="entry name" value="Aldolase_TIM"/>
</dbReference>
<dbReference type="InterPro" id="IPR036206">
    <property type="entry name" value="ThiamineP_synth_sf"/>
</dbReference>
<dbReference type="InterPro" id="IPR022998">
    <property type="entry name" value="ThiamineP_synth_TenI"/>
</dbReference>
<dbReference type="InterPro" id="IPR034291">
    <property type="entry name" value="TMP_synthase"/>
</dbReference>
<dbReference type="NCBIfam" id="TIGR00693">
    <property type="entry name" value="thiE"/>
    <property type="match status" value="1"/>
</dbReference>
<dbReference type="PANTHER" id="PTHR20857">
    <property type="entry name" value="THIAMINE-PHOSPHATE PYROPHOSPHORYLASE"/>
    <property type="match status" value="1"/>
</dbReference>
<dbReference type="PANTHER" id="PTHR20857:SF15">
    <property type="entry name" value="THIAMINE-PHOSPHATE SYNTHASE"/>
    <property type="match status" value="1"/>
</dbReference>
<dbReference type="Pfam" id="PF02581">
    <property type="entry name" value="TMP-TENI"/>
    <property type="match status" value="1"/>
</dbReference>
<dbReference type="SUPFAM" id="SSF51391">
    <property type="entry name" value="Thiamin phosphate synthase"/>
    <property type="match status" value="1"/>
</dbReference>
<name>THIE_AZOC5</name>
<reference key="1">
    <citation type="submission" date="2007-04" db="EMBL/GenBank/DDBJ databases">
        <title>Complete genome sequence of the nitrogen-fixing bacterium Azorhizobium caulinodans ORS571.</title>
        <authorList>
            <person name="Lee K.B."/>
            <person name="Backer P.D."/>
            <person name="Aono T."/>
            <person name="Liu C.T."/>
            <person name="Suzuki S."/>
            <person name="Suzuki T."/>
            <person name="Kaneko T."/>
            <person name="Yamada M."/>
            <person name="Tabata S."/>
            <person name="Kupfer D.M."/>
            <person name="Najar F.Z."/>
            <person name="Wiley G.B."/>
            <person name="Roe B."/>
            <person name="Binnewies T."/>
            <person name="Ussery D."/>
            <person name="Vereecke D."/>
            <person name="Gevers D."/>
            <person name="Holsters M."/>
            <person name="Oyaizu H."/>
        </authorList>
    </citation>
    <scope>NUCLEOTIDE SEQUENCE [LARGE SCALE GENOMIC DNA]</scope>
    <source>
        <strain>ATCC 43989 / DSM 5975 / JCM 20966 / LMG 6465 / NBRC 14845 / NCIMB 13405 / ORS 571</strain>
    </source>
</reference>
<proteinExistence type="inferred from homology"/>
<feature type="chain" id="PRO_0000336375" description="Thiamine-phosphate synthase">
    <location>
        <begin position="1"/>
        <end position="212"/>
    </location>
</feature>
<feature type="binding site" evidence="1">
    <location>
        <begin position="39"/>
        <end position="41"/>
    </location>
    <ligand>
        <name>4-amino-2-methyl-5-(diphosphooxymethyl)pyrimidine</name>
        <dbReference type="ChEBI" id="CHEBI:57841"/>
    </ligand>
</feature>
<feature type="binding site" evidence="1">
    <location>
        <position position="71"/>
    </location>
    <ligand>
        <name>4-amino-2-methyl-5-(diphosphooxymethyl)pyrimidine</name>
        <dbReference type="ChEBI" id="CHEBI:57841"/>
    </ligand>
</feature>
<feature type="binding site" evidence="1">
    <location>
        <position position="72"/>
    </location>
    <ligand>
        <name>Mg(2+)</name>
        <dbReference type="ChEBI" id="CHEBI:18420"/>
    </ligand>
</feature>
<feature type="binding site" evidence="1">
    <location>
        <position position="91"/>
    </location>
    <ligand>
        <name>Mg(2+)</name>
        <dbReference type="ChEBI" id="CHEBI:18420"/>
    </ligand>
</feature>
<feature type="binding site" evidence="1">
    <location>
        <position position="110"/>
    </location>
    <ligand>
        <name>4-amino-2-methyl-5-(diphosphooxymethyl)pyrimidine</name>
        <dbReference type="ChEBI" id="CHEBI:57841"/>
    </ligand>
</feature>
<feature type="binding site" evidence="1">
    <location>
        <begin position="136"/>
        <end position="138"/>
    </location>
    <ligand>
        <name>2-[(2R,5Z)-2-carboxy-4-methylthiazol-5(2H)-ylidene]ethyl phosphate</name>
        <dbReference type="ChEBI" id="CHEBI:62899"/>
    </ligand>
</feature>
<feature type="binding site" evidence="1">
    <location>
        <position position="139"/>
    </location>
    <ligand>
        <name>4-amino-2-methyl-5-(diphosphooxymethyl)pyrimidine</name>
        <dbReference type="ChEBI" id="CHEBI:57841"/>
    </ligand>
</feature>
<feature type="binding site" evidence="1">
    <location>
        <position position="167"/>
    </location>
    <ligand>
        <name>2-[(2R,5Z)-2-carboxy-4-methylthiazol-5(2H)-ylidene]ethyl phosphate</name>
        <dbReference type="ChEBI" id="CHEBI:62899"/>
    </ligand>
</feature>
<feature type="binding site" evidence="1">
    <location>
        <begin position="187"/>
        <end position="188"/>
    </location>
    <ligand>
        <name>2-[(2R,5Z)-2-carboxy-4-methylthiazol-5(2H)-ylidene]ethyl phosphate</name>
        <dbReference type="ChEBI" id="CHEBI:62899"/>
    </ligand>
</feature>
<comment type="function">
    <text evidence="1">Condenses 4-methyl-5-(beta-hydroxyethyl)thiazole monophosphate (THZ-P) and 2-methyl-4-amino-5-hydroxymethyl pyrimidine pyrophosphate (HMP-PP) to form thiamine monophosphate (TMP).</text>
</comment>
<comment type="catalytic activity">
    <reaction evidence="1">
        <text>2-[(2R,5Z)-2-carboxy-4-methylthiazol-5(2H)-ylidene]ethyl phosphate + 4-amino-2-methyl-5-(diphosphooxymethyl)pyrimidine + 2 H(+) = thiamine phosphate + CO2 + diphosphate</text>
        <dbReference type="Rhea" id="RHEA:47844"/>
        <dbReference type="ChEBI" id="CHEBI:15378"/>
        <dbReference type="ChEBI" id="CHEBI:16526"/>
        <dbReference type="ChEBI" id="CHEBI:33019"/>
        <dbReference type="ChEBI" id="CHEBI:37575"/>
        <dbReference type="ChEBI" id="CHEBI:57841"/>
        <dbReference type="ChEBI" id="CHEBI:62899"/>
        <dbReference type="EC" id="2.5.1.3"/>
    </reaction>
</comment>
<comment type="catalytic activity">
    <reaction evidence="1">
        <text>2-(2-carboxy-4-methylthiazol-5-yl)ethyl phosphate + 4-amino-2-methyl-5-(diphosphooxymethyl)pyrimidine + 2 H(+) = thiamine phosphate + CO2 + diphosphate</text>
        <dbReference type="Rhea" id="RHEA:47848"/>
        <dbReference type="ChEBI" id="CHEBI:15378"/>
        <dbReference type="ChEBI" id="CHEBI:16526"/>
        <dbReference type="ChEBI" id="CHEBI:33019"/>
        <dbReference type="ChEBI" id="CHEBI:37575"/>
        <dbReference type="ChEBI" id="CHEBI:57841"/>
        <dbReference type="ChEBI" id="CHEBI:62890"/>
        <dbReference type="EC" id="2.5.1.3"/>
    </reaction>
</comment>
<comment type="catalytic activity">
    <reaction evidence="1">
        <text>4-methyl-5-(2-phosphooxyethyl)-thiazole + 4-amino-2-methyl-5-(diphosphooxymethyl)pyrimidine + H(+) = thiamine phosphate + diphosphate</text>
        <dbReference type="Rhea" id="RHEA:22328"/>
        <dbReference type="ChEBI" id="CHEBI:15378"/>
        <dbReference type="ChEBI" id="CHEBI:33019"/>
        <dbReference type="ChEBI" id="CHEBI:37575"/>
        <dbReference type="ChEBI" id="CHEBI:57841"/>
        <dbReference type="ChEBI" id="CHEBI:58296"/>
        <dbReference type="EC" id="2.5.1.3"/>
    </reaction>
</comment>
<comment type="cofactor">
    <cofactor evidence="1">
        <name>Mg(2+)</name>
        <dbReference type="ChEBI" id="CHEBI:18420"/>
    </cofactor>
    <text evidence="1">Binds 1 Mg(2+) ion per subunit.</text>
</comment>
<comment type="pathway">
    <text evidence="1">Cofactor biosynthesis; thiamine diphosphate biosynthesis; thiamine phosphate from 4-amino-2-methyl-5-diphosphomethylpyrimidine and 4-methyl-5-(2-phosphoethyl)-thiazole: step 1/1.</text>
</comment>
<comment type="similarity">
    <text evidence="1">Belongs to the thiamine-phosphate synthase family.</text>
</comment>
<comment type="sequence caution" evidence="2">
    <conflict type="erroneous initiation">
        <sequence resource="EMBL-CDS" id="BAF86077"/>
    </conflict>
</comment>
<keyword id="KW-0460">Magnesium</keyword>
<keyword id="KW-0479">Metal-binding</keyword>
<keyword id="KW-1185">Reference proteome</keyword>
<keyword id="KW-0784">Thiamine biosynthesis</keyword>
<keyword id="KW-0808">Transferase</keyword>
<sequence>MPHPFDLSLYLVTDRRLTAERGLLETVEEAVAGGVTLVQLRDPEAKGRALAEEARALIGLLRPKGIPLIINDRVDVAAAVGAEGVHLGQDDLDPAAARAILGPDAIIGLSVGSLEELSASNLGPVDYVGCGPINATGTKGDAGGAIGIEGFAFLRSHIALPMVGIGGLKAEDAEAVMQAGANGIAVVSALCAAPDVTEAARTLKTIIETSRR</sequence>
<organism>
    <name type="scientific">Azorhizobium caulinodans (strain ATCC 43989 / DSM 5975 / JCM 20966 / LMG 6465 / NBRC 14845 / NCIMB 13405 / ORS 571)</name>
    <dbReference type="NCBI Taxonomy" id="438753"/>
    <lineage>
        <taxon>Bacteria</taxon>
        <taxon>Pseudomonadati</taxon>
        <taxon>Pseudomonadota</taxon>
        <taxon>Alphaproteobacteria</taxon>
        <taxon>Hyphomicrobiales</taxon>
        <taxon>Xanthobacteraceae</taxon>
        <taxon>Azorhizobium</taxon>
    </lineage>
</organism>
<protein>
    <recommendedName>
        <fullName evidence="1">Thiamine-phosphate synthase</fullName>
        <shortName evidence="1">TP synthase</shortName>
        <shortName evidence="1">TPS</shortName>
        <ecNumber evidence="1">2.5.1.3</ecNumber>
    </recommendedName>
    <alternativeName>
        <fullName evidence="1">Thiamine-phosphate pyrophosphorylase</fullName>
        <shortName evidence="1">TMP pyrophosphorylase</shortName>
        <shortName evidence="1">TMP-PPase</shortName>
    </alternativeName>
</protein>
<accession>A8IGE6</accession>
<evidence type="ECO:0000255" key="1">
    <source>
        <dbReference type="HAMAP-Rule" id="MF_00097"/>
    </source>
</evidence>
<evidence type="ECO:0000305" key="2"/>